<feature type="transit peptide" description="Mitochondrion" evidence="2">
    <location>
        <begin position="1"/>
        <end position="25"/>
    </location>
</feature>
<feature type="chain" id="PRO_0000043241" description="Mitochondrial inner membrane magnesium transporter MRS2">
    <location>
        <begin position="26"/>
        <end position="423"/>
    </location>
</feature>
<feature type="transmembrane region" description="Helical" evidence="2">
    <location>
        <begin position="289"/>
        <end position="309"/>
    </location>
</feature>
<feature type="transmembrane region" description="Helical" evidence="2">
    <location>
        <begin position="324"/>
        <end position="344"/>
    </location>
</feature>
<feature type="short sequence motif" description="CGMN">
    <location>
        <begin position="313"/>
        <end position="316"/>
    </location>
</feature>
<dbReference type="EMBL" id="AE016817">
    <property type="protein sequence ID" value="AAS52279.1"/>
    <property type="molecule type" value="Genomic_DNA"/>
</dbReference>
<dbReference type="RefSeq" id="NP_984455.1">
    <property type="nucleotide sequence ID" value="NM_209808.1"/>
</dbReference>
<dbReference type="SMR" id="Q759B8"/>
<dbReference type="FunCoup" id="Q759B8">
    <property type="interactions" value="372"/>
</dbReference>
<dbReference type="EnsemblFungi" id="AAS52279">
    <property type="protein sequence ID" value="AAS52279"/>
    <property type="gene ID" value="AGOS_ADR359W"/>
</dbReference>
<dbReference type="GeneID" id="4620620"/>
<dbReference type="KEGG" id="ago:AGOS_ADR359W"/>
<dbReference type="eggNOG" id="KOG2662">
    <property type="taxonomic scope" value="Eukaryota"/>
</dbReference>
<dbReference type="HOGENOM" id="CLU_025144_1_0_1"/>
<dbReference type="InParanoid" id="Q759B8"/>
<dbReference type="OMA" id="FKQKGVM"/>
<dbReference type="OrthoDB" id="10251508at2759"/>
<dbReference type="Proteomes" id="UP000000591">
    <property type="component" value="Chromosome IV"/>
</dbReference>
<dbReference type="GO" id="GO:0005743">
    <property type="term" value="C:mitochondrial inner membrane"/>
    <property type="evidence" value="ECO:0000250"/>
    <property type="project" value="UniProtKB"/>
</dbReference>
<dbReference type="GO" id="GO:1901612">
    <property type="term" value="F:cardiolipin binding"/>
    <property type="evidence" value="ECO:0007669"/>
    <property type="project" value="EnsemblFungi"/>
</dbReference>
<dbReference type="GO" id="GO:0015095">
    <property type="term" value="F:magnesium ion transmembrane transporter activity"/>
    <property type="evidence" value="ECO:0000250"/>
    <property type="project" value="UniProtKB"/>
</dbReference>
<dbReference type="GO" id="GO:0045016">
    <property type="term" value="P:mitochondrial magnesium ion transmembrane transport"/>
    <property type="evidence" value="ECO:0000250"/>
    <property type="project" value="UniProtKB"/>
</dbReference>
<dbReference type="CDD" id="cd12823">
    <property type="entry name" value="Mrs2_Mfm1p-like"/>
    <property type="match status" value="1"/>
</dbReference>
<dbReference type="FunFam" id="1.20.58.340:FF:000005">
    <property type="entry name" value="Inner membrane magnesium transporter MRS2"/>
    <property type="match status" value="1"/>
</dbReference>
<dbReference type="Gene3D" id="2.40.128.330">
    <property type="match status" value="1"/>
</dbReference>
<dbReference type="Gene3D" id="1.20.58.340">
    <property type="entry name" value="Magnesium transport protein CorA, transmembrane region"/>
    <property type="match status" value="1"/>
</dbReference>
<dbReference type="InterPro" id="IPR039204">
    <property type="entry name" value="MRS2-like"/>
</dbReference>
<dbReference type="PANTHER" id="PTHR13890:SF27">
    <property type="entry name" value="MAGNESIUM TRANSPORTER MRS2, MITOCHONDRIAL"/>
    <property type="match status" value="1"/>
</dbReference>
<dbReference type="PANTHER" id="PTHR13890">
    <property type="entry name" value="RNA SPLICING PROTEIN MRS2, MITOCHONDRIAL"/>
    <property type="match status" value="1"/>
</dbReference>
<dbReference type="Pfam" id="PF22099">
    <property type="entry name" value="MRS2-like"/>
    <property type="match status" value="1"/>
</dbReference>
<accession>Q759B8</accession>
<protein>
    <recommendedName>
        <fullName>Mitochondrial inner membrane magnesium transporter MRS2</fullName>
    </recommendedName>
    <alternativeName>
        <fullName>RNA-splicing protein MRS2</fullName>
    </alternativeName>
</protein>
<reference key="1">
    <citation type="journal article" date="2004" name="Science">
        <title>The Ashbya gossypii genome as a tool for mapping the ancient Saccharomyces cerevisiae genome.</title>
        <authorList>
            <person name="Dietrich F.S."/>
            <person name="Voegeli S."/>
            <person name="Brachat S."/>
            <person name="Lerch A."/>
            <person name="Gates K."/>
            <person name="Steiner S."/>
            <person name="Mohr C."/>
            <person name="Poehlmann R."/>
            <person name="Luedi P."/>
            <person name="Choi S."/>
            <person name="Wing R.A."/>
            <person name="Flavier A."/>
            <person name="Gaffney T.D."/>
            <person name="Philippsen P."/>
        </authorList>
    </citation>
    <scope>NUCLEOTIDE SEQUENCE [LARGE SCALE GENOMIC DNA]</scope>
    <source>
        <strain>ATCC 10895 / CBS 109.51 / FGSC 9923 / NRRL Y-1056</strain>
    </source>
</reference>
<reference key="2">
    <citation type="journal article" date="2013" name="G3 (Bethesda)">
        <title>Genomes of Ashbya fungi isolated from insects reveal four mating-type loci, numerous translocations, lack of transposons, and distinct gene duplications.</title>
        <authorList>
            <person name="Dietrich F.S."/>
            <person name="Voegeli S."/>
            <person name="Kuo S."/>
            <person name="Philippsen P."/>
        </authorList>
    </citation>
    <scope>GENOME REANNOTATION</scope>
    <source>
        <strain>ATCC 10895 / CBS 109.51 / FGSC 9923 / NRRL Y-1056</strain>
    </source>
</reference>
<name>MRS2_EREGS</name>
<evidence type="ECO:0000250" key="1">
    <source>
        <dbReference type="UniProtKB" id="Q01926"/>
    </source>
</evidence>
<evidence type="ECO:0000255" key="2"/>
<evidence type="ECO:0000305" key="3"/>
<sequence>MLRWIPTRICPRLCTRGFASSCARLAQGPAFFVKPITPNDLFVSCTVFNEKGAVTGVSERYPKLSFLRDRGLYPRDLRKLDTSSIEVIPSIVVKPTCILVNLLHIKAVIEKNRVYVFDTTSKEAAARLGVLMYDLESKLASHSSQPAQHYEHRALESILVNVMTCLETEFKHLSKQCGLVLNELEDQIDRDKLRDLLIHSKDLTSFYQKSLLIRDMLDELLESDEDLAAMCLSPAPGTVEADAAEVEMLLETYYKQCDEYVQQSGSLLQNIKSTEDVVNIILDANRNSLMLFELKVTIYTLGFTVATLLPAFCGMNLKNFIEESVWGFGGVLAVSAVAGLAVTASNFKALRNVARLTVMNSHSTSPGAKNISSARLHLDRDVPTLWMRLKTAFRTIWFGKSRPSRDGRQRDMIWKWLLDDTSK</sequence>
<gene>
    <name type="primary">MRS2</name>
    <name type="ordered locus">ADR359W</name>
</gene>
<proteinExistence type="inferred from homology"/>
<comment type="function">
    <text evidence="1">High-conductance magnesium-selective channel that mediates the influx of magnesium into the mitochondrial matrix. Essential for the splicing of mRNA group II introns in mitochondria by affecting mitochondrial magnesium concentrations, which are critical for group II intron splicing. It also suppresses a variety of mitochondrial intron mutations and its absence may disturb the assembly of mitochondrial membrane complexes.</text>
</comment>
<comment type="subunit">
    <text evidence="1">Homopentamer. Forms homooligomers. Interacts with MFM1.</text>
</comment>
<comment type="subcellular location">
    <subcellularLocation>
        <location evidence="1">Mitochondrion inner membrane</location>
        <topology evidence="1">Multi-pass membrane protein</topology>
    </subcellularLocation>
</comment>
<comment type="similarity">
    <text evidence="3">Belongs to the CorA metal ion transporter (MIT) (TC 1.A.35) family.</text>
</comment>
<organism>
    <name type="scientific">Eremothecium gossypii (strain ATCC 10895 / CBS 109.51 / FGSC 9923 / NRRL Y-1056)</name>
    <name type="common">Yeast</name>
    <name type="synonym">Ashbya gossypii</name>
    <dbReference type="NCBI Taxonomy" id="284811"/>
    <lineage>
        <taxon>Eukaryota</taxon>
        <taxon>Fungi</taxon>
        <taxon>Dikarya</taxon>
        <taxon>Ascomycota</taxon>
        <taxon>Saccharomycotina</taxon>
        <taxon>Saccharomycetes</taxon>
        <taxon>Saccharomycetales</taxon>
        <taxon>Saccharomycetaceae</taxon>
        <taxon>Eremothecium</taxon>
    </lineage>
</organism>
<keyword id="KW-0406">Ion transport</keyword>
<keyword id="KW-0460">Magnesium</keyword>
<keyword id="KW-0472">Membrane</keyword>
<keyword id="KW-0496">Mitochondrion</keyword>
<keyword id="KW-0999">Mitochondrion inner membrane</keyword>
<keyword id="KW-1185">Reference proteome</keyword>
<keyword id="KW-0809">Transit peptide</keyword>
<keyword id="KW-0812">Transmembrane</keyword>
<keyword id="KW-1133">Transmembrane helix</keyword>
<keyword id="KW-0813">Transport</keyword>